<protein>
    <recommendedName>
        <fullName>U12-theraphotoxin-Hs1a</fullName>
        <shortName>U12-TRTX-Hs1a</shortName>
    </recommendedName>
    <alternativeName>
        <fullName>Huwentoxin-10a</fullName>
    </alternativeName>
    <alternativeName>
        <fullName>Huwentoxin-Xa</fullName>
        <shortName>HwTx-Xa</shortName>
    </alternativeName>
</protein>
<evidence type="ECO:0000250" key="1"/>
<evidence type="ECO:0000255" key="2"/>
<organism>
    <name type="scientific">Cyriopagopus schmidti</name>
    <name type="common">Chinese bird spider</name>
    <name type="synonym">Haplopelma schmidti</name>
    <dbReference type="NCBI Taxonomy" id="29017"/>
    <lineage>
        <taxon>Eukaryota</taxon>
        <taxon>Metazoa</taxon>
        <taxon>Ecdysozoa</taxon>
        <taxon>Arthropoda</taxon>
        <taxon>Chelicerata</taxon>
        <taxon>Arachnida</taxon>
        <taxon>Araneae</taxon>
        <taxon>Mygalomorphae</taxon>
        <taxon>Theraphosidae</taxon>
        <taxon>Cyriopagopus</taxon>
    </lineage>
</organism>
<feature type="signal peptide" evidence="2">
    <location>
        <begin position="1"/>
        <end position="20"/>
    </location>
</feature>
<feature type="propeptide" id="PRO_0000379920" evidence="1">
    <location>
        <begin position="21"/>
        <end position="40"/>
    </location>
</feature>
<feature type="peptide" id="PRO_0000379921" description="U12-theraphotoxin-Hs1a">
    <location>
        <begin position="41"/>
        <end position="74"/>
    </location>
</feature>
<feature type="disulfide bond" evidence="1">
    <location>
        <begin position="42"/>
        <end position="56"/>
    </location>
</feature>
<feature type="disulfide bond" evidence="1">
    <location>
        <begin position="49"/>
        <end position="61"/>
    </location>
</feature>
<feature type="disulfide bond" evidence="1">
    <location>
        <begin position="55"/>
        <end position="71"/>
    </location>
</feature>
<comment type="function">
    <text>Putative ion channel inhibitor.</text>
</comment>
<comment type="subcellular location">
    <subcellularLocation>
        <location evidence="1">Secreted</location>
    </subcellularLocation>
</comment>
<comment type="tissue specificity">
    <text>Expressed by the venom gland.</text>
</comment>
<comment type="domain">
    <text evidence="1">The presence of a 'disulfide through disulfide knot' structurally defines this protein as a knottin.</text>
</comment>
<comment type="similarity">
    <text>Belongs to the neurotoxin 35 family.</text>
</comment>
<accession>B3FIU2</accession>
<proteinExistence type="evidence at transcript level"/>
<reference key="1">
    <citation type="journal article" date="2008" name="Toxicon">
        <title>Molecular diversification based on analysis of expressed sequence tags from the venom glands of the Chinese bird spider Ornithoctonus huwena.</title>
        <authorList>
            <person name="Jiang L."/>
            <person name="Peng L."/>
            <person name="Chen J."/>
            <person name="Zhang Y."/>
            <person name="Xiong X."/>
            <person name="Liang S."/>
        </authorList>
    </citation>
    <scope>NUCLEOTIDE SEQUENCE [MRNA]</scope>
    <source>
        <tissue>Venom gland</tissue>
    </source>
</reference>
<keyword id="KW-1015">Disulfide bond</keyword>
<keyword id="KW-0872">Ion channel impairing toxin</keyword>
<keyword id="KW-0960">Knottin</keyword>
<keyword id="KW-0528">Neurotoxin</keyword>
<keyword id="KW-0964">Secreted</keyword>
<keyword id="KW-0732">Signal</keyword>
<keyword id="KW-0800">Toxin</keyword>
<name>TX10A_CYRSC</name>
<dbReference type="EMBL" id="EU195286">
    <property type="protein sequence ID" value="ABY77739.1"/>
    <property type="molecule type" value="mRNA"/>
</dbReference>
<dbReference type="SMR" id="B3FIU2"/>
<dbReference type="ArachnoServer" id="AS000656">
    <property type="toxin name" value="U12-theraphotoxin-Hs1a"/>
</dbReference>
<dbReference type="GO" id="GO:0005576">
    <property type="term" value="C:extracellular region"/>
    <property type="evidence" value="ECO:0007669"/>
    <property type="project" value="UniProtKB-SubCell"/>
</dbReference>
<dbReference type="GO" id="GO:0099106">
    <property type="term" value="F:ion channel regulator activity"/>
    <property type="evidence" value="ECO:0007669"/>
    <property type="project" value="UniProtKB-KW"/>
</dbReference>
<dbReference type="GO" id="GO:0090729">
    <property type="term" value="F:toxin activity"/>
    <property type="evidence" value="ECO:0007669"/>
    <property type="project" value="UniProtKB-KW"/>
</dbReference>
<dbReference type="Pfam" id="PF05980">
    <property type="entry name" value="Toxin_7"/>
    <property type="match status" value="1"/>
</dbReference>
<sequence length="74" mass="8222">MNVKILLLLVGLNLVMHSNATGDSETNPAETLFIEEIFRRGCFKEGKWCPKSAPCCAPLKCKGPSIKQQKCVRE</sequence>